<protein>
    <recommendedName>
        <fullName>BAG family molecular chaperone regulator 2</fullName>
        <shortName>BAG-2</shortName>
    </recommendedName>
    <alternativeName>
        <fullName>Bcl-2-associated athanogene 2</fullName>
    </alternativeName>
</protein>
<comment type="function">
    <text evidence="1">Co-chaperone for HSP70 and HSC70 chaperone proteins. Acts as a nucleotide-exchange factor (NEF) promoting the release of ADP from the HSP70 and HSC70 proteins thereby triggering client/substrate protein release.</text>
</comment>
<comment type="subunit">
    <text evidence="1">Binds to the ATPase domain of HSP/HSC70 chaperones. May interact with NWD1. Interacts with HSPA1A (via NBD), HSPA1B (via NBD) and HSPA8. May interact with DNJC9; the interaction seems to be histone-dependent (By similarity).</text>
</comment>
<evidence type="ECO:0000250" key="1">
    <source>
        <dbReference type="UniProtKB" id="O95816"/>
    </source>
</evidence>
<evidence type="ECO:0000255" key="2"/>
<evidence type="ECO:0000255" key="3">
    <source>
        <dbReference type="PROSITE-ProRule" id="PRU00369"/>
    </source>
</evidence>
<accession>Q3ZBG5</accession>
<name>BAG2_BOVIN</name>
<reference key="1">
    <citation type="submission" date="2005-08" db="EMBL/GenBank/DDBJ databases">
        <authorList>
            <consortium name="NIH - Mammalian Gene Collection (MGC) project"/>
        </authorList>
    </citation>
    <scope>NUCLEOTIDE SEQUENCE [LARGE SCALE MRNA]</scope>
    <source>
        <strain>Hereford</strain>
        <tissue>Uterus</tissue>
    </source>
</reference>
<gene>
    <name evidence="1" type="primary">BAG2</name>
</gene>
<proteinExistence type="evidence at transcript level"/>
<organism>
    <name type="scientific">Bos taurus</name>
    <name type="common">Bovine</name>
    <dbReference type="NCBI Taxonomy" id="9913"/>
    <lineage>
        <taxon>Eukaryota</taxon>
        <taxon>Metazoa</taxon>
        <taxon>Chordata</taxon>
        <taxon>Craniata</taxon>
        <taxon>Vertebrata</taxon>
        <taxon>Euteleostomi</taxon>
        <taxon>Mammalia</taxon>
        <taxon>Eutheria</taxon>
        <taxon>Laurasiatheria</taxon>
        <taxon>Artiodactyla</taxon>
        <taxon>Ruminantia</taxon>
        <taxon>Pecora</taxon>
        <taxon>Bovidae</taxon>
        <taxon>Bovinae</taxon>
        <taxon>Bos</taxon>
    </lineage>
</organism>
<keyword id="KW-0007">Acetylation</keyword>
<keyword id="KW-0143">Chaperone</keyword>
<keyword id="KW-0175">Coiled coil</keyword>
<keyword id="KW-0597">Phosphoprotein</keyword>
<keyword id="KW-1185">Reference proteome</keyword>
<feature type="initiator methionine" description="Removed" evidence="1">
    <location>
        <position position="1"/>
    </location>
</feature>
<feature type="chain" id="PRO_0000282938" description="BAG family molecular chaperone regulator 2">
    <location>
        <begin position="2"/>
        <end position="211"/>
    </location>
</feature>
<feature type="domain" description="BAG" evidence="3">
    <location>
        <begin position="109"/>
        <end position="189"/>
    </location>
</feature>
<feature type="coiled-coil region" evidence="2">
    <location>
        <begin position="20"/>
        <end position="61"/>
    </location>
</feature>
<feature type="modified residue" description="N-acetylalanine" evidence="1">
    <location>
        <position position="2"/>
    </location>
</feature>
<feature type="modified residue" description="Phosphoserine" evidence="1">
    <location>
        <position position="20"/>
    </location>
</feature>
<feature type="modified residue" description="Phosphoserine" evidence="1">
    <location>
        <position position="31"/>
    </location>
</feature>
<feature type="modified residue" description="Phosphoserine" evidence="1">
    <location>
        <position position="73"/>
    </location>
</feature>
<sequence>MAQARISAKANEGRFCRSSSMADRSSRLLESLDQLELRVEALREAATAVEQEKEVLLEMIHSIQNSQDMRQISDGEREELNLTANRLMGRTLTVEVSVETIRSPQQQESLKHATRIIDEVVSKFLDDLGNARSHLMSLYSACSSEVPAGPVDQKFQSIVIGCALEDQKKIKRRLETLLRNIENADKAIKLLEHSKGAASKTLQQNAEARFN</sequence>
<dbReference type="EMBL" id="BC103308">
    <property type="protein sequence ID" value="AAI03309.1"/>
    <property type="molecule type" value="mRNA"/>
</dbReference>
<dbReference type="RefSeq" id="NP_001029436.1">
    <property type="nucleotide sequence ID" value="NM_001034264.1"/>
</dbReference>
<dbReference type="SMR" id="Q3ZBG5"/>
<dbReference type="FunCoup" id="Q3ZBG5">
    <property type="interactions" value="914"/>
</dbReference>
<dbReference type="STRING" id="9913.ENSBTAP00000007039"/>
<dbReference type="PaxDb" id="9913-ENSBTAP00000007039"/>
<dbReference type="GeneID" id="506107"/>
<dbReference type="KEGG" id="bta:506107"/>
<dbReference type="CTD" id="9532"/>
<dbReference type="VEuPathDB" id="HostDB:ENSBTAG00000005355"/>
<dbReference type="eggNOG" id="KOG3633">
    <property type="taxonomic scope" value="Eukaryota"/>
</dbReference>
<dbReference type="HOGENOM" id="CLU_072417_2_0_1"/>
<dbReference type="InParanoid" id="Q3ZBG5"/>
<dbReference type="OMA" id="LHATKMI"/>
<dbReference type="OrthoDB" id="6284251at2759"/>
<dbReference type="TreeFam" id="TF102012"/>
<dbReference type="Reactome" id="R-BTA-3371453">
    <property type="pathway name" value="Regulation of HSF1-mediated heat shock response"/>
</dbReference>
<dbReference type="Proteomes" id="UP000009136">
    <property type="component" value="Chromosome 23"/>
</dbReference>
<dbReference type="Bgee" id="ENSBTAG00000005355">
    <property type="expression patterns" value="Expressed in myometrium and 105 other cell types or tissues"/>
</dbReference>
<dbReference type="GO" id="GO:0000774">
    <property type="term" value="F:adenyl-nucleotide exchange factor activity"/>
    <property type="evidence" value="ECO:0000250"/>
    <property type="project" value="UniProtKB"/>
</dbReference>
<dbReference type="GO" id="GO:0051087">
    <property type="term" value="F:protein-folding chaperone binding"/>
    <property type="evidence" value="ECO:0007669"/>
    <property type="project" value="InterPro"/>
</dbReference>
<dbReference type="GO" id="GO:0050821">
    <property type="term" value="P:protein stabilization"/>
    <property type="evidence" value="ECO:0000318"/>
    <property type="project" value="GO_Central"/>
</dbReference>
<dbReference type="FunFam" id="1.20.58.890:FF:000001">
    <property type="entry name" value="BAG family molecular chaperone regulator 2"/>
    <property type="match status" value="1"/>
</dbReference>
<dbReference type="Gene3D" id="1.20.58.890">
    <property type="match status" value="1"/>
</dbReference>
<dbReference type="InterPro" id="IPR037689">
    <property type="entry name" value="BAG2"/>
</dbReference>
<dbReference type="InterPro" id="IPR003103">
    <property type="entry name" value="BAG_domain"/>
</dbReference>
<dbReference type="PANTHER" id="PTHR12334">
    <property type="entry name" value="BAG FAMILY MOLECULAR CHAPERONE REGULATOR 2"/>
    <property type="match status" value="1"/>
</dbReference>
<dbReference type="PANTHER" id="PTHR12334:SF6">
    <property type="entry name" value="BAG FAMILY MOLECULAR CHAPERONE REGULATOR 2"/>
    <property type="match status" value="1"/>
</dbReference>
<dbReference type="SMART" id="SM00264">
    <property type="entry name" value="BAG"/>
    <property type="match status" value="1"/>
</dbReference>
<dbReference type="PROSITE" id="PS51035">
    <property type="entry name" value="BAG"/>
    <property type="match status" value="1"/>
</dbReference>